<accession>P22320</accession>
<accession>Q7WXN0</accession>
<name>HOXH_CUPNH</name>
<keyword id="KW-0963">Cytoplasm</keyword>
<keyword id="KW-0903">Direct protein sequencing</keyword>
<keyword id="KW-0479">Metal-binding</keyword>
<keyword id="KW-0520">NAD</keyword>
<keyword id="KW-0533">Nickel</keyword>
<keyword id="KW-0560">Oxidoreductase</keyword>
<keyword id="KW-0614">Plasmid</keyword>
<keyword id="KW-1185">Reference proteome</keyword>
<protein>
    <recommendedName>
        <fullName>NAD-reducing hydrogenase HoxS subunit beta</fullName>
        <ecNumber>1.12.1.2</ecNumber>
    </recommendedName>
</protein>
<reference key="1">
    <citation type="journal article" date="1990" name="J. Bacteriol.">
        <title>Cloning and nucleotide sequences of the genes for the subunits of NAD-reducing hydrogenase of Alcaligenes eutrophus H16.</title>
        <authorList>
            <person name="Tran-Betcke A."/>
            <person name="Warnecke U."/>
            <person name="Boecker C."/>
            <person name="Zaborosch C."/>
            <person name="Friedrich B."/>
        </authorList>
    </citation>
    <scope>NUCLEOTIDE SEQUENCE [GENOMIC DNA]</scope>
</reference>
<reference key="2">
    <citation type="journal article" date="2003" name="J. Mol. Biol.">
        <title>Complete nucleotide sequence of pHG1: a Ralstonia eutropha H16 megaplasmid encoding key enzymes of H(2)-based lithoautotrophy and anaerobiosis.</title>
        <authorList>
            <person name="Schwartz E."/>
            <person name="Henne A."/>
            <person name="Cramm R."/>
            <person name="Eitinger T."/>
            <person name="Friedrich B."/>
            <person name="Gottschalk G."/>
        </authorList>
    </citation>
    <scope>NUCLEOTIDE SEQUENCE [LARGE SCALE GENOMIC DNA]</scope>
    <source>
        <strain>ATCC 17699 / DSM 428 / KCTC 22496 / NCIMB 10442 / H16 / Stanier 337</strain>
    </source>
</reference>
<reference key="3">
    <citation type="journal article" date="1989" name="Eur. J. Biochem.">
        <title>Comparison of the NH2-terminal amino acid sequences of the four non-identical subunits of the NAD-linked hydrogenases from Nocardia opaca 1b and Alcaligenes eutrophus H16.</title>
        <authorList>
            <person name="Zaborosch C."/>
            <person name="Schneider K."/>
            <person name="Schlegel H.G."/>
            <person name="Kratzin H."/>
        </authorList>
    </citation>
    <scope>PROTEIN SEQUENCE OF 2-39</scope>
</reference>
<geneLocation type="plasmid">
    <name>megaplasmid pHG1</name>
</geneLocation>
<evidence type="ECO:0000255" key="1"/>
<evidence type="ECO:0000269" key="2">
    <source>
    </source>
</evidence>
<evidence type="ECO:0000305" key="3"/>
<sequence>MSRKLVIDPVTRIEGHGKVVVHLDDDNKVVDAKLHVVEFRGFEKFVQGHPFWEAPMFLQRICGICFVSHHLCGAKALDDMVGVGLKSGIHVTPTAEKMRRLGHYAQMLQSHTTAYFYLIVPEMLFGMDAPPAQRNVLGLIEANPDLVKRVVMLRKWGQEVIKAVFGKKMHGINSVPGGVNNNLSIAERDRFLNGEEGLLSVDQVIDYAQDGLRLFYDFHQKHRAQVDSFADVPALSMCLVGDDDNVDYYHGRLRIIDDDKHIVREFDYHDYLDHFSEAVEEWSYMKFPYLKELGREQGSVRVGPLGRMNVTKSLPTPLAQEALERFHAYTKGRTNNMTLHTNWARAIEILHAAEVVKELLHDPDLQKDQLVLTPPPNAWTGEGVGVVEAPRGTLLHHYRADERGNITFANLVVATTQNNQVMNRTVRSVAEDYLGGHGEITEGMMNAIEVGIRAYDPCLSCATHALGQMPLVVSVFDAAGRLIDERAR</sequence>
<dbReference type="EC" id="1.12.1.2"/>
<dbReference type="EMBL" id="M55230">
    <property type="protein sequence ID" value="AAC06143.1"/>
    <property type="molecule type" value="Genomic_DNA"/>
</dbReference>
<dbReference type="EMBL" id="AY305378">
    <property type="protein sequence ID" value="AAP85844.1"/>
    <property type="molecule type" value="Genomic_DNA"/>
</dbReference>
<dbReference type="PIR" id="D35385">
    <property type="entry name" value="D35385"/>
</dbReference>
<dbReference type="RefSeq" id="WP_011154013.1">
    <property type="nucleotide sequence ID" value="NC_005241.1"/>
</dbReference>
<dbReference type="SMR" id="P22320"/>
<dbReference type="IntAct" id="P22320">
    <property type="interactions" value="1"/>
</dbReference>
<dbReference type="KEGG" id="reh:PHG091"/>
<dbReference type="PATRIC" id="fig|381666.6.peg.68"/>
<dbReference type="eggNOG" id="COG3259">
    <property type="taxonomic scope" value="Bacteria"/>
</dbReference>
<dbReference type="HOGENOM" id="CLU_044556_0_0_4"/>
<dbReference type="OrthoDB" id="9761717at2"/>
<dbReference type="BioCyc" id="MetaCyc:HOXHALCA-MONOMER"/>
<dbReference type="BRENDA" id="1.12.1.2">
    <property type="organism ID" value="231"/>
</dbReference>
<dbReference type="Proteomes" id="UP000008210">
    <property type="component" value="Plasmid megaplasmid pHG1"/>
</dbReference>
<dbReference type="GO" id="GO:0005737">
    <property type="term" value="C:cytoplasm"/>
    <property type="evidence" value="ECO:0007669"/>
    <property type="project" value="UniProtKB-SubCell"/>
</dbReference>
<dbReference type="GO" id="GO:0008901">
    <property type="term" value="F:ferredoxin hydrogenase activity"/>
    <property type="evidence" value="ECO:0007669"/>
    <property type="project" value="InterPro"/>
</dbReference>
<dbReference type="GO" id="GO:0047985">
    <property type="term" value="F:hydrogen dehydrogenase activity"/>
    <property type="evidence" value="ECO:0007669"/>
    <property type="project" value="UniProtKB-EC"/>
</dbReference>
<dbReference type="GO" id="GO:0016151">
    <property type="term" value="F:nickel cation binding"/>
    <property type="evidence" value="ECO:0007669"/>
    <property type="project" value="InterPro"/>
</dbReference>
<dbReference type="Gene3D" id="1.10.645.10">
    <property type="entry name" value="Cytochrome-c3 Hydrogenase, chain B"/>
    <property type="match status" value="1"/>
</dbReference>
<dbReference type="InterPro" id="IPR001501">
    <property type="entry name" value="Ni-dep_hyd_lsu"/>
</dbReference>
<dbReference type="InterPro" id="IPR018194">
    <property type="entry name" value="Ni-dep_hyd_lsu_Ni_BS"/>
</dbReference>
<dbReference type="InterPro" id="IPR029014">
    <property type="entry name" value="NiFe-Hase_large"/>
</dbReference>
<dbReference type="PANTHER" id="PTHR43600">
    <property type="entry name" value="COENZYME F420 HYDROGENASE, SUBUNIT ALPHA"/>
    <property type="match status" value="1"/>
</dbReference>
<dbReference type="PANTHER" id="PTHR43600:SF2">
    <property type="entry name" value="F420-NON-REDUCING HYDROGENASE VHU SUBUNIT A"/>
    <property type="match status" value="1"/>
</dbReference>
<dbReference type="Pfam" id="PF00374">
    <property type="entry name" value="NiFeSe_Hases"/>
    <property type="match status" value="2"/>
</dbReference>
<dbReference type="SUPFAM" id="SSF56762">
    <property type="entry name" value="HydB/Nqo4-like"/>
    <property type="match status" value="1"/>
</dbReference>
<dbReference type="PROSITE" id="PS00507">
    <property type="entry name" value="NI_HGENASE_L_1"/>
    <property type="match status" value="1"/>
</dbReference>
<dbReference type="PROSITE" id="PS00508">
    <property type="entry name" value="NI_HGENASE_L_2"/>
    <property type="match status" value="1"/>
</dbReference>
<proteinExistence type="evidence at protein level"/>
<organism>
    <name type="scientific">Cupriavidus necator (strain ATCC 17699 / DSM 428 / KCTC 22496 / NCIMB 10442 / H16 / Stanier 337)</name>
    <name type="common">Ralstonia eutropha</name>
    <dbReference type="NCBI Taxonomy" id="381666"/>
    <lineage>
        <taxon>Bacteria</taxon>
        <taxon>Pseudomonadati</taxon>
        <taxon>Pseudomonadota</taxon>
        <taxon>Betaproteobacteria</taxon>
        <taxon>Burkholderiales</taxon>
        <taxon>Burkholderiaceae</taxon>
        <taxon>Cupriavidus</taxon>
    </lineage>
</organism>
<comment type="catalytic activity">
    <reaction>
        <text>H2 + NAD(+) = NADH + H(+)</text>
        <dbReference type="Rhea" id="RHEA:24636"/>
        <dbReference type="ChEBI" id="CHEBI:15378"/>
        <dbReference type="ChEBI" id="CHEBI:18276"/>
        <dbReference type="ChEBI" id="CHEBI:57540"/>
        <dbReference type="ChEBI" id="CHEBI:57945"/>
        <dbReference type="EC" id="1.12.1.2"/>
    </reaction>
</comment>
<comment type="cofactor">
    <cofactor>
        <name>FMN</name>
        <dbReference type="ChEBI" id="CHEBI:58210"/>
    </cofactor>
</comment>
<comment type="cofactor">
    <cofactor>
        <name>Ni(2+)</name>
        <dbReference type="ChEBI" id="CHEBI:49786"/>
    </cofactor>
</comment>
<comment type="subunit">
    <text>Tetramer of an alpha and a gamma subunits (flavin-containing dimer), and a delta and a nickel-containing beta subunits (hydrogenase dimer).</text>
</comment>
<comment type="subcellular location">
    <subcellularLocation>
        <location>Cytoplasm</location>
    </subcellularLocation>
</comment>
<comment type="similarity">
    <text evidence="3">Belongs to the [NiFe]/[NiFeSe] hydrogenase large subunit family.</text>
</comment>
<gene>
    <name type="primary">hoxH</name>
    <name type="ordered locus">PHG091</name>
</gene>
<feature type="initiator methionine" description="Removed" evidence="2">
    <location>
        <position position="1"/>
    </location>
</feature>
<feature type="chain" id="PRO_0000199719" description="NAD-reducing hydrogenase HoxS subunit beta">
    <location>
        <begin position="2"/>
        <end position="488"/>
    </location>
</feature>
<feature type="binding site" evidence="1">
    <location>
        <position position="62"/>
    </location>
    <ligand>
        <name>Ni(2+)</name>
        <dbReference type="ChEBI" id="CHEBI:49786"/>
    </ligand>
</feature>
<feature type="binding site" evidence="1">
    <location>
        <position position="65"/>
    </location>
    <ligand>
        <name>Ni(2+)</name>
        <dbReference type="ChEBI" id="CHEBI:49786"/>
    </ligand>
</feature>
<feature type="binding site" evidence="1">
    <location>
        <position position="458"/>
    </location>
    <ligand>
        <name>Ni(2+)</name>
        <dbReference type="ChEBI" id="CHEBI:49786"/>
    </ligand>
</feature>
<feature type="binding site" evidence="1">
    <location>
        <position position="461"/>
    </location>
    <ligand>
        <name>Ni(2+)</name>
        <dbReference type="ChEBI" id="CHEBI:49786"/>
    </ligand>
</feature>
<feature type="sequence conflict" description="In Ref. 3; AA sequence." evidence="3" ref="3">
    <original>V</original>
    <variation>R</variation>
    <location>
        <position position="30"/>
    </location>
</feature>
<feature type="sequence conflict" description="In Ref. 3; AA sequence." evidence="3" ref="3">
    <original>A</original>
    <variation>T</variation>
    <location>
        <position position="32"/>
    </location>
</feature>
<feature type="sequence conflict" description="In Ref. 3; AA sequence." evidence="3" ref="3">
    <original>V</original>
    <variation>R</variation>
    <location>
        <position position="37"/>
    </location>
</feature>
<feature type="sequence conflict" description="In Ref. 1; AAC06143." evidence="3" ref="1">
    <original>N</original>
    <variation>H</variation>
    <location>
        <position position="419"/>
    </location>
</feature>